<accession>P0A9U7</accession>
<accession>P38522</accession>
<accession>P76839</accession>
<accession>P77417</accession>
<feature type="chain" id="PRO_0000149732" description="HTH-type transcriptional regulator PuuR">
    <location>
        <begin position="1"/>
        <end position="185"/>
    </location>
</feature>
<feature type="domain" description="HTH cro/C1-type" evidence="3">
    <location>
        <begin position="12"/>
        <end position="66"/>
    </location>
</feature>
<feature type="domain" description="Cupin type-2" evidence="2">
    <location>
        <begin position="111"/>
        <end position="178"/>
    </location>
</feature>
<feature type="DNA-binding region" description="H-T-H motif" evidence="3">
    <location>
        <begin position="23"/>
        <end position="42"/>
    </location>
</feature>
<feature type="region of interest" description="Disordered" evidence="4">
    <location>
        <begin position="1"/>
        <end position="20"/>
    </location>
</feature>
<gene>
    <name type="primary">puuR</name>
    <name type="ordered locus">SF1304</name>
    <name type="ordered locus">S1386</name>
</gene>
<keyword id="KW-0238">DNA-binding</keyword>
<keyword id="KW-1185">Reference proteome</keyword>
<keyword id="KW-0804">Transcription</keyword>
<keyword id="KW-0805">Transcription regulation</keyword>
<comment type="function">
    <text evidence="1">Represses puuD.</text>
</comment>
<comment type="pathway">
    <text>Amine and polyamine degradation; putrescine degradation [regulation].</text>
</comment>
<dbReference type="EMBL" id="AE005674">
    <property type="protein sequence ID" value="AAN42915.1"/>
    <property type="molecule type" value="Genomic_DNA"/>
</dbReference>
<dbReference type="EMBL" id="AE014073">
    <property type="protein sequence ID" value="AAP16797.1"/>
    <property type="molecule type" value="Genomic_DNA"/>
</dbReference>
<dbReference type="RefSeq" id="WP_001278727.1">
    <property type="nucleotide sequence ID" value="NZ_WPGW01000009.1"/>
</dbReference>
<dbReference type="SMR" id="P0A9U7"/>
<dbReference type="STRING" id="198214.SF1304"/>
<dbReference type="PaxDb" id="198214-SF1304"/>
<dbReference type="GeneID" id="93775425"/>
<dbReference type="KEGG" id="sfl:SF1304"/>
<dbReference type="KEGG" id="sfx:S1386"/>
<dbReference type="PATRIC" id="fig|198214.7.peg.1530"/>
<dbReference type="HOGENOM" id="CLU_085376_1_4_6"/>
<dbReference type="UniPathway" id="UPA00188"/>
<dbReference type="Proteomes" id="UP000001006">
    <property type="component" value="Chromosome"/>
</dbReference>
<dbReference type="Proteomes" id="UP000002673">
    <property type="component" value="Chromosome"/>
</dbReference>
<dbReference type="GO" id="GO:0005829">
    <property type="term" value="C:cytosol"/>
    <property type="evidence" value="ECO:0007669"/>
    <property type="project" value="TreeGrafter"/>
</dbReference>
<dbReference type="GO" id="GO:0003677">
    <property type="term" value="F:DNA binding"/>
    <property type="evidence" value="ECO:0007669"/>
    <property type="project" value="UniProtKB-KW"/>
</dbReference>
<dbReference type="GO" id="GO:0003700">
    <property type="term" value="F:DNA-binding transcription factor activity"/>
    <property type="evidence" value="ECO:0007669"/>
    <property type="project" value="TreeGrafter"/>
</dbReference>
<dbReference type="GO" id="GO:0009447">
    <property type="term" value="P:putrescine catabolic process"/>
    <property type="evidence" value="ECO:0007669"/>
    <property type="project" value="UniProtKB-UniPathway"/>
</dbReference>
<dbReference type="CDD" id="cd02209">
    <property type="entry name" value="cupin_XRE_C"/>
    <property type="match status" value="1"/>
</dbReference>
<dbReference type="CDD" id="cd00093">
    <property type="entry name" value="HTH_XRE"/>
    <property type="match status" value="1"/>
</dbReference>
<dbReference type="FunFam" id="1.10.260.40:FF:000016">
    <property type="entry name" value="HTH-type transcriptional regulator PuuR"/>
    <property type="match status" value="1"/>
</dbReference>
<dbReference type="FunFam" id="2.60.120.10:FF:000029">
    <property type="entry name" value="HTH-type transcriptional regulator PuuR"/>
    <property type="match status" value="1"/>
</dbReference>
<dbReference type="Gene3D" id="2.60.120.10">
    <property type="entry name" value="Jelly Rolls"/>
    <property type="match status" value="1"/>
</dbReference>
<dbReference type="Gene3D" id="1.10.260.40">
    <property type="entry name" value="lambda repressor-like DNA-binding domains"/>
    <property type="match status" value="1"/>
</dbReference>
<dbReference type="InterPro" id="IPR050807">
    <property type="entry name" value="Bact_TransReg_Diox"/>
</dbReference>
<dbReference type="InterPro" id="IPR001387">
    <property type="entry name" value="Cro/C1-type_HTH"/>
</dbReference>
<dbReference type="InterPro" id="IPR013096">
    <property type="entry name" value="Cupin_2"/>
</dbReference>
<dbReference type="InterPro" id="IPR010982">
    <property type="entry name" value="Lambda_DNA-bd_dom_sf"/>
</dbReference>
<dbReference type="InterPro" id="IPR014710">
    <property type="entry name" value="RmlC-like_jellyroll"/>
</dbReference>
<dbReference type="InterPro" id="IPR011051">
    <property type="entry name" value="RmlC_Cupin_sf"/>
</dbReference>
<dbReference type="NCBIfam" id="NF007408">
    <property type="entry name" value="PRK09943.1"/>
    <property type="match status" value="1"/>
</dbReference>
<dbReference type="PANTHER" id="PTHR46797">
    <property type="entry name" value="HTH-TYPE TRANSCRIPTIONAL REGULATOR"/>
    <property type="match status" value="1"/>
</dbReference>
<dbReference type="PANTHER" id="PTHR46797:SF11">
    <property type="entry name" value="HTH-TYPE TRANSCRIPTIONAL REGULATOR PUUR"/>
    <property type="match status" value="1"/>
</dbReference>
<dbReference type="Pfam" id="PF07883">
    <property type="entry name" value="Cupin_2"/>
    <property type="match status" value="1"/>
</dbReference>
<dbReference type="Pfam" id="PF01381">
    <property type="entry name" value="HTH_3"/>
    <property type="match status" value="1"/>
</dbReference>
<dbReference type="SMART" id="SM00530">
    <property type="entry name" value="HTH_XRE"/>
    <property type="match status" value="1"/>
</dbReference>
<dbReference type="SUPFAM" id="SSF47413">
    <property type="entry name" value="lambda repressor-like DNA-binding domains"/>
    <property type="match status" value="1"/>
</dbReference>
<dbReference type="SUPFAM" id="SSF51182">
    <property type="entry name" value="RmlC-like cupins"/>
    <property type="match status" value="1"/>
</dbReference>
<dbReference type="PROSITE" id="PS50943">
    <property type="entry name" value="HTH_CROC1"/>
    <property type="match status" value="1"/>
</dbReference>
<proteinExistence type="inferred from homology"/>
<sequence length="185" mass="20092">MSDEGLAPGKRLSEIRQQQGLSQRRAAELSGLTHSAISTIEQDKVSPAISTLQKLLKVYGLSLSEFFSEPEKPDEPQVVINQDDLIEMGSQGVSMKLVHNGNPNRTLAMIFETYQPGTTTGERIKHQGEEIGTVLEGEIVLTINGQDYHLVAGQSYAINTGIPHSFSNTSAGICRIISAHTPTTF</sequence>
<organism>
    <name type="scientific">Shigella flexneri</name>
    <dbReference type="NCBI Taxonomy" id="623"/>
    <lineage>
        <taxon>Bacteria</taxon>
        <taxon>Pseudomonadati</taxon>
        <taxon>Pseudomonadota</taxon>
        <taxon>Gammaproteobacteria</taxon>
        <taxon>Enterobacterales</taxon>
        <taxon>Enterobacteriaceae</taxon>
        <taxon>Shigella</taxon>
    </lineage>
</organism>
<protein>
    <recommendedName>
        <fullName>HTH-type transcriptional regulator PuuR</fullName>
    </recommendedName>
</protein>
<reference key="1">
    <citation type="journal article" date="2002" name="Nucleic Acids Res.">
        <title>Genome sequence of Shigella flexneri 2a: insights into pathogenicity through comparison with genomes of Escherichia coli K12 and O157.</title>
        <authorList>
            <person name="Jin Q."/>
            <person name="Yuan Z."/>
            <person name="Xu J."/>
            <person name="Wang Y."/>
            <person name="Shen Y."/>
            <person name="Lu W."/>
            <person name="Wang J."/>
            <person name="Liu H."/>
            <person name="Yang J."/>
            <person name="Yang F."/>
            <person name="Zhang X."/>
            <person name="Zhang J."/>
            <person name="Yang G."/>
            <person name="Wu H."/>
            <person name="Qu D."/>
            <person name="Dong J."/>
            <person name="Sun L."/>
            <person name="Xue Y."/>
            <person name="Zhao A."/>
            <person name="Gao Y."/>
            <person name="Zhu J."/>
            <person name="Kan B."/>
            <person name="Ding K."/>
            <person name="Chen S."/>
            <person name="Cheng H."/>
            <person name="Yao Z."/>
            <person name="He B."/>
            <person name="Chen R."/>
            <person name="Ma D."/>
            <person name="Qiang B."/>
            <person name="Wen Y."/>
            <person name="Hou Y."/>
            <person name="Yu J."/>
        </authorList>
    </citation>
    <scope>NUCLEOTIDE SEQUENCE [LARGE SCALE GENOMIC DNA]</scope>
    <source>
        <strain>301 / Serotype 2a</strain>
    </source>
</reference>
<reference key="2">
    <citation type="journal article" date="2003" name="Infect. Immun.">
        <title>Complete genome sequence and comparative genomics of Shigella flexneri serotype 2a strain 2457T.</title>
        <authorList>
            <person name="Wei J."/>
            <person name="Goldberg M.B."/>
            <person name="Burland V."/>
            <person name="Venkatesan M.M."/>
            <person name="Deng W."/>
            <person name="Fournier G."/>
            <person name="Mayhew G.F."/>
            <person name="Plunkett G. III"/>
            <person name="Rose D.J."/>
            <person name="Darling A."/>
            <person name="Mau B."/>
            <person name="Perna N.T."/>
            <person name="Payne S.M."/>
            <person name="Runyen-Janecky L.J."/>
            <person name="Zhou S."/>
            <person name="Schwartz D.C."/>
            <person name="Blattner F.R."/>
        </authorList>
    </citation>
    <scope>NUCLEOTIDE SEQUENCE [LARGE SCALE GENOMIC DNA]</scope>
    <source>
        <strain>ATCC 700930 / 2457T / Serotype 2a</strain>
    </source>
</reference>
<name>PUUR_SHIFL</name>
<evidence type="ECO:0000250" key="1"/>
<evidence type="ECO:0000255" key="2"/>
<evidence type="ECO:0000255" key="3">
    <source>
        <dbReference type="PROSITE-ProRule" id="PRU00257"/>
    </source>
</evidence>
<evidence type="ECO:0000256" key="4">
    <source>
        <dbReference type="SAM" id="MobiDB-lite"/>
    </source>
</evidence>